<protein>
    <recommendedName>
        <fullName>Zinc finger and BTB domain-containing protein 20</fullName>
    </recommendedName>
    <alternativeName>
        <fullName>Dendritic-derived BTB/POZ zinc finger protein</fullName>
    </alternativeName>
    <alternativeName>
        <fullName>Zinc finger protein 288</fullName>
    </alternativeName>
</protein>
<gene>
    <name type="primary">ZBTB20</name>
    <name type="synonym">DPZF</name>
    <name type="synonym">ZNF288</name>
</gene>
<feature type="chain" id="PRO_0000047733" description="Zinc finger and BTB domain-containing protein 20">
    <location>
        <begin position="1"/>
        <end position="741"/>
    </location>
</feature>
<feature type="domain" description="BTB" evidence="3">
    <location>
        <begin position="104"/>
        <end position="167"/>
    </location>
</feature>
<feature type="zinc finger region" description="C2H2-type 1" evidence="4">
    <location>
        <begin position="578"/>
        <end position="600"/>
    </location>
</feature>
<feature type="zinc finger region" description="C2H2-type 2" evidence="4">
    <location>
        <begin position="606"/>
        <end position="628"/>
    </location>
</feature>
<feature type="zinc finger region" description="C2H2-type 3" evidence="4">
    <location>
        <begin position="634"/>
        <end position="656"/>
    </location>
</feature>
<feature type="zinc finger region" description="C2H2-type 4" evidence="4">
    <location>
        <begin position="662"/>
        <end position="684"/>
    </location>
</feature>
<feature type="zinc finger region" description="C2H2-type 5" evidence="4">
    <location>
        <begin position="715"/>
        <end position="737"/>
    </location>
</feature>
<feature type="region of interest" description="Disordered" evidence="5">
    <location>
        <begin position="1"/>
        <end position="32"/>
    </location>
</feature>
<feature type="region of interest" description="Disordered" evidence="5">
    <location>
        <begin position="203"/>
        <end position="235"/>
    </location>
</feature>
<feature type="region of interest" description="Disordered" evidence="5">
    <location>
        <begin position="350"/>
        <end position="440"/>
    </location>
</feature>
<feature type="compositionally biased region" description="Basic and acidic residues" evidence="5">
    <location>
        <begin position="1"/>
        <end position="17"/>
    </location>
</feature>
<feature type="compositionally biased region" description="Polar residues" evidence="5">
    <location>
        <begin position="206"/>
        <end position="235"/>
    </location>
</feature>
<feature type="compositionally biased region" description="Acidic residues" evidence="5">
    <location>
        <begin position="354"/>
        <end position="367"/>
    </location>
</feature>
<feature type="compositionally biased region" description="Low complexity" evidence="5">
    <location>
        <begin position="404"/>
        <end position="423"/>
    </location>
</feature>
<feature type="compositionally biased region" description="Polar residues" evidence="5">
    <location>
        <begin position="424"/>
        <end position="434"/>
    </location>
</feature>
<feature type="modified residue" description="Phosphothreonine" evidence="12">
    <location>
        <position position="211"/>
    </location>
</feature>
<feature type="modified residue" description="Phosphoserine" evidence="12">
    <location>
        <position position="353"/>
    </location>
</feature>
<feature type="modified residue" description="Phosphothreonine" evidence="2">
    <location>
        <position position="357"/>
    </location>
</feature>
<feature type="modified residue" description="Phosphothreonine" evidence="2">
    <location>
        <position position="690"/>
    </location>
</feature>
<feature type="modified residue" description="Phosphothreonine" evidence="2">
    <location>
        <position position="695"/>
    </location>
</feature>
<feature type="cross-link" description="Glycyl lysine isopeptide (Lys-Gly) (interchain with G-Cter in SUMO1); alternate" evidence="13">
    <location>
        <position position="330"/>
    </location>
</feature>
<feature type="cross-link" description="Glycyl lysine isopeptide (Lys-Gly) (interchain with G-Cter in SUMO2); alternate" evidence="13 14 15 16 17">
    <location>
        <position position="330"/>
    </location>
</feature>
<feature type="cross-link" description="Glycyl lysine isopeptide (Lys-Gly) (interchain with G-Cter in SUMO2)" evidence="17">
    <location>
        <position position="371"/>
    </location>
</feature>
<feature type="cross-link" description="Glycyl lysine isopeptide (Lys-Gly) (interchain with G-Cter in SUMO2)" evidence="17">
    <location>
        <position position="723"/>
    </location>
</feature>
<feature type="splice variant" id="VSP_032503" description="In isoform 2." evidence="8 9 10">
    <location>
        <begin position="1"/>
        <end position="73"/>
    </location>
</feature>
<feature type="sequence variant" id="VAR_072583" description="In PRIMS; does not affect subcellular location; strongly reduced DNA binding; reduced ability to repress transcription; dominant-negative effect of the mutant on the wild-type allele; dbSNP:rs483353064." evidence="7">
    <original>K</original>
    <variation>Q</variation>
    <location>
        <position position="590"/>
    </location>
</feature>
<feature type="sequence variant" id="VAR_072584" description="In PRIMS; strongly reduced DNA binding; strongly reduced ability to repress transcription; dominant-negative effect of the mutant on the wild-type allele; dbSNP:rs483353066." evidence="7">
    <original>H</original>
    <variation>R</variation>
    <location>
        <position position="596"/>
    </location>
</feature>
<feature type="sequence variant" id="VAR_072585" description="In PRIMS; strongly reduced DNA binding; strongly reduced ability to repress transcription; dominant-negative effect of the mutant on the wild-type allele; dbSNP:rs483353068." evidence="7">
    <original>G</original>
    <variation>A</variation>
    <location>
        <position position="602"/>
    </location>
</feature>
<feature type="sequence variant" id="VAR_072586" description="In PRIMS; strongly reduced DNA binding; reduced ability to repress transcription; dominant-negative effect of the mutant on the wild-type allele; dbSNP:rs483353070." evidence="7">
    <original>L</original>
    <variation>F</variation>
    <location>
        <position position="621"/>
    </location>
</feature>
<feature type="sequence conflict" description="In Ref. 1; AAG28340." evidence="11" ref="1">
    <original>S</original>
    <variation>G</variation>
    <location>
        <position position="224"/>
    </location>
</feature>
<feature type="sequence conflict" description="In Ref. 1; AAG28340." evidence="11" ref="1">
    <original>V</original>
    <variation>M</variation>
    <location>
        <position position="266"/>
    </location>
</feature>
<feature type="sequence conflict" description="In Ref. 3; CAH56190." evidence="11" ref="3">
    <original>E</original>
    <variation>G</variation>
    <location>
        <position position="332"/>
    </location>
</feature>
<feature type="sequence conflict" description="In Ref. 1; AAG28340." evidence="11" ref="1">
    <original>Y</original>
    <variation>F</variation>
    <location>
        <position position="337"/>
    </location>
</feature>
<feature type="sequence conflict" description="In Ref. 1; AAG28340." evidence="11" ref="1">
    <original>S</original>
    <variation>F</variation>
    <location>
        <position position="465"/>
    </location>
</feature>
<feature type="sequence conflict" description="In Ref. 1; AAG28340." evidence="11" ref="1">
    <original>A</original>
    <variation>V</variation>
    <location>
        <position position="517"/>
    </location>
</feature>
<feature type="sequence conflict" description="In Ref. 5; AAH29041." evidence="11" ref="5">
    <original>S</original>
    <variation>F</variation>
    <location>
        <position position="543"/>
    </location>
</feature>
<sequence length="741" mass="81083">MLERKKPKTAENQKASEENEITQPGGSSAKPGLPCLNFEAVLSPDPALIHSTHSLTNSHAHTGSSDCDISCKGMTERIHSINLHNFSNSVLETLNEQRNRGHFCDVTVRIHGSMLRAHRCVLAAGSPFFQDKLLLGYSDIEIPSVVSVQSVQKLIDFMYSGVLRVSQSEALQILTAASILQIKTVIDECTRIVSQNVGDVFPGIQDSGQDTPRGTPESGTSGQSSDTESGYLQSHPQHSVDRIYSALYACSMQNGSGERSFYSGAVVSHHETALGLPRDHHMEDPSWITRIHERSQQMERYLSTTPETTHCRKQPRPVRIQTLVGNIHIKQEMEDDYDYYGQQRVQILERNESEECTEDTDQAEGTESEPKGESFDSGVSSSIGTEPDSVEQQFGPGAARDSQAEPTQPEQAAEAPAEGGPQTNQLETGASSPERSNEVEMDSTVITVSNSSDKSVLQQPSVNTSIGQPLPSTQLYLRQTETLTSNLRMPLTLTSNTQVIGTAGNTYLPALFTTQPAGSGPKPFLFSLPQPLAGQQTQFVTVSQPGLSTFTAQLPAPQPLASSAGHSTASGQGEKKPYECTLCNKTFTAKQNYVKHMFVHTGEKPHQCSICWRSFSLKDYLIKHMVTHTGVRAYQCSICNKRFTQKSSLNVHMRLHRGEKSYECYICKKKFSHKTLLERHVALHSASNGTPPAGTPPGARAGPPGVVACTEGTTYVCSVCPAKFDQIEQFNDHMRMHVSDG</sequence>
<organism>
    <name type="scientific">Homo sapiens</name>
    <name type="common">Human</name>
    <dbReference type="NCBI Taxonomy" id="9606"/>
    <lineage>
        <taxon>Eukaryota</taxon>
        <taxon>Metazoa</taxon>
        <taxon>Chordata</taxon>
        <taxon>Craniata</taxon>
        <taxon>Vertebrata</taxon>
        <taxon>Euteleostomi</taxon>
        <taxon>Mammalia</taxon>
        <taxon>Eutheria</taxon>
        <taxon>Euarchontoglires</taxon>
        <taxon>Primates</taxon>
        <taxon>Haplorrhini</taxon>
        <taxon>Catarrhini</taxon>
        <taxon>Hominidae</taxon>
        <taxon>Homo</taxon>
    </lineage>
</organism>
<evidence type="ECO:0000250" key="1"/>
<evidence type="ECO:0000250" key="2">
    <source>
        <dbReference type="UniProtKB" id="Q8K0L9"/>
    </source>
</evidence>
<evidence type="ECO:0000255" key="3">
    <source>
        <dbReference type="PROSITE-ProRule" id="PRU00037"/>
    </source>
</evidence>
<evidence type="ECO:0000255" key="4">
    <source>
        <dbReference type="PROSITE-ProRule" id="PRU00042"/>
    </source>
</evidence>
<evidence type="ECO:0000256" key="5">
    <source>
        <dbReference type="SAM" id="MobiDB-lite"/>
    </source>
</evidence>
<evidence type="ECO:0000269" key="6">
    <source>
    </source>
</evidence>
<evidence type="ECO:0000269" key="7">
    <source>
    </source>
</evidence>
<evidence type="ECO:0000303" key="8">
    <source>
    </source>
</evidence>
<evidence type="ECO:0000303" key="9">
    <source>
    </source>
</evidence>
<evidence type="ECO:0000303" key="10">
    <source>
    </source>
</evidence>
<evidence type="ECO:0000305" key="11"/>
<evidence type="ECO:0007744" key="12">
    <source>
    </source>
</evidence>
<evidence type="ECO:0007744" key="13">
    <source>
    </source>
</evidence>
<evidence type="ECO:0007744" key="14">
    <source>
    </source>
</evidence>
<evidence type="ECO:0007744" key="15">
    <source>
    </source>
</evidence>
<evidence type="ECO:0007744" key="16">
    <source>
    </source>
</evidence>
<evidence type="ECO:0007744" key="17">
    <source>
    </source>
</evidence>
<proteinExistence type="evidence at protein level"/>
<reference key="1">
    <citation type="journal article" date="2001" name="Biochem. Biophys. Res. Commun.">
        <title>Identification and characterization of DPZF, a novel human BTB/POZ zinc finger protein sharing homology to BCL-6.</title>
        <authorList>
            <person name="Zhang W."/>
            <person name="Mi J."/>
            <person name="Li N."/>
            <person name="Sui L."/>
            <person name="Wan T."/>
            <person name="Zhang J."/>
            <person name="Chen T."/>
            <person name="Cao X."/>
        </authorList>
    </citation>
    <scope>NUCLEOTIDE SEQUENCE [MRNA] (ISOFORM 1)</scope>
    <scope>FUNCTION</scope>
    <scope>TISSUE SPECIFICITY</scope>
</reference>
<reference key="2">
    <citation type="journal article" date="2001" name="Genome Res.">
        <title>Towards a catalog of human genes and proteins: sequencing and analysis of 500 novel complete protein coding human cDNAs.</title>
        <authorList>
            <person name="Wiemann S."/>
            <person name="Weil B."/>
            <person name="Wellenreuther R."/>
            <person name="Gassenhuber J."/>
            <person name="Glassl S."/>
            <person name="Ansorge W."/>
            <person name="Boecher M."/>
            <person name="Bloecker H."/>
            <person name="Bauersachs S."/>
            <person name="Blum H."/>
            <person name="Lauber J."/>
            <person name="Duesterhoeft A."/>
            <person name="Beyer A."/>
            <person name="Koehrer K."/>
            <person name="Strack N."/>
            <person name="Mewes H.-W."/>
            <person name="Ottenwaelder B."/>
            <person name="Obermaier B."/>
            <person name="Tampe J."/>
            <person name="Heubner D."/>
            <person name="Wambutt R."/>
            <person name="Korn B."/>
            <person name="Klein M."/>
            <person name="Poustka A."/>
        </authorList>
    </citation>
    <scope>NUCLEOTIDE SEQUENCE [LARGE SCALE MRNA] (ISOFORM 2)</scope>
    <source>
        <tissue>Kidney</tissue>
    </source>
</reference>
<reference key="3">
    <citation type="journal article" date="2007" name="BMC Genomics">
        <title>The full-ORF clone resource of the German cDNA consortium.</title>
        <authorList>
            <person name="Bechtel S."/>
            <person name="Rosenfelder H."/>
            <person name="Duda A."/>
            <person name="Schmidt C.P."/>
            <person name="Ernst U."/>
            <person name="Wellenreuther R."/>
            <person name="Mehrle A."/>
            <person name="Schuster C."/>
            <person name="Bahr A."/>
            <person name="Bloecker H."/>
            <person name="Heubner D."/>
            <person name="Hoerlein A."/>
            <person name="Michel G."/>
            <person name="Wedler H."/>
            <person name="Koehrer K."/>
            <person name="Ottenwaelder B."/>
            <person name="Poustka A."/>
            <person name="Wiemann S."/>
            <person name="Schupp I."/>
        </authorList>
    </citation>
    <scope>NUCLEOTIDE SEQUENCE [LARGE SCALE MRNA] (ISOFORM 2)</scope>
    <source>
        <tissue>Endometrium</tissue>
    </source>
</reference>
<reference key="4">
    <citation type="submission" date="2005-09" db="EMBL/GenBank/DDBJ databases">
        <authorList>
            <person name="Mural R.J."/>
            <person name="Istrail S."/>
            <person name="Sutton G.G."/>
            <person name="Florea L."/>
            <person name="Halpern A.L."/>
            <person name="Mobarry C.M."/>
            <person name="Lippert R."/>
            <person name="Walenz B."/>
            <person name="Shatkay H."/>
            <person name="Dew I."/>
            <person name="Miller J.R."/>
            <person name="Flanigan M.J."/>
            <person name="Edwards N.J."/>
            <person name="Bolanos R."/>
            <person name="Fasulo D."/>
            <person name="Halldorsson B.V."/>
            <person name="Hannenhalli S."/>
            <person name="Turner R."/>
            <person name="Yooseph S."/>
            <person name="Lu F."/>
            <person name="Nusskern D.R."/>
            <person name="Shue B.C."/>
            <person name="Zheng X.H."/>
            <person name="Zhong F."/>
            <person name="Delcher A.L."/>
            <person name="Huson D.H."/>
            <person name="Kravitz S.A."/>
            <person name="Mouchard L."/>
            <person name="Reinert K."/>
            <person name="Remington K.A."/>
            <person name="Clark A.G."/>
            <person name="Waterman M.S."/>
            <person name="Eichler E.E."/>
            <person name="Adams M.D."/>
            <person name="Hunkapiller M.W."/>
            <person name="Myers E.W."/>
            <person name="Venter J.C."/>
        </authorList>
    </citation>
    <scope>NUCLEOTIDE SEQUENCE [LARGE SCALE GENOMIC DNA]</scope>
</reference>
<reference key="5">
    <citation type="journal article" date="2004" name="Genome Res.">
        <title>The status, quality, and expansion of the NIH full-length cDNA project: the Mammalian Gene Collection (MGC).</title>
        <authorList>
            <consortium name="The MGC Project Team"/>
        </authorList>
    </citation>
    <scope>NUCLEOTIDE SEQUENCE [LARGE SCALE MRNA] (ISOFORM 2)</scope>
    <source>
        <tissue>Colon</tissue>
    </source>
</reference>
<reference key="6">
    <citation type="journal article" date="2009" name="Sci. Signal.">
        <title>Quantitative phosphoproteomic analysis of T cell receptor signaling reveals system-wide modulation of protein-protein interactions.</title>
        <authorList>
            <person name="Mayya V."/>
            <person name="Lundgren D.H."/>
            <person name="Hwang S.-I."/>
            <person name="Rezaul K."/>
            <person name="Wu L."/>
            <person name="Eng J.K."/>
            <person name="Rodionov V."/>
            <person name="Han D.K."/>
        </authorList>
    </citation>
    <scope>IDENTIFICATION BY MASS SPECTROMETRY [LARGE SCALE ANALYSIS]</scope>
    <source>
        <tissue>Leukemic T-cell</tissue>
    </source>
</reference>
<reference key="7">
    <citation type="journal article" date="2010" name="Sci. Signal.">
        <title>Quantitative phosphoproteomics reveals widespread full phosphorylation site occupancy during mitosis.</title>
        <authorList>
            <person name="Olsen J.V."/>
            <person name="Vermeulen M."/>
            <person name="Santamaria A."/>
            <person name="Kumar C."/>
            <person name="Miller M.L."/>
            <person name="Jensen L.J."/>
            <person name="Gnad F."/>
            <person name="Cox J."/>
            <person name="Jensen T.S."/>
            <person name="Nigg E.A."/>
            <person name="Brunak S."/>
            <person name="Mann M."/>
        </authorList>
    </citation>
    <scope>IDENTIFICATION BY MASS SPECTROMETRY [LARGE SCALE ANALYSIS]</scope>
    <source>
        <tissue>Cervix carcinoma</tissue>
    </source>
</reference>
<reference key="8">
    <citation type="journal article" date="2014" name="J. Proteomics">
        <title>An enzyme assisted RP-RPLC approach for in-depth analysis of human liver phosphoproteome.</title>
        <authorList>
            <person name="Bian Y."/>
            <person name="Song C."/>
            <person name="Cheng K."/>
            <person name="Dong M."/>
            <person name="Wang F."/>
            <person name="Huang J."/>
            <person name="Sun D."/>
            <person name="Wang L."/>
            <person name="Ye M."/>
            <person name="Zou H."/>
        </authorList>
    </citation>
    <scope>PHOSPHORYLATION [LARGE SCALE ANALYSIS] AT THR-211 AND SER-353</scope>
    <scope>IDENTIFICATION BY MASS SPECTROMETRY [LARGE SCALE ANALYSIS]</scope>
    <source>
        <tissue>Liver</tissue>
    </source>
</reference>
<reference key="9">
    <citation type="journal article" date="2014" name="Nat. Genet.">
        <title>Mutations in ZBTB20 cause Primrose syndrome.</title>
        <authorList>
            <person name="Cordeddu V."/>
            <person name="Redeker B."/>
            <person name="Stellacci E."/>
            <person name="Jongejan A."/>
            <person name="Fragale A."/>
            <person name="Bradley T.E."/>
            <person name="Anselmi M."/>
            <person name="Ciolfi A."/>
            <person name="Cecchetti S."/>
            <person name="Muto V."/>
            <person name="Bernardini L."/>
            <person name="Azage M."/>
            <person name="Carvalho D.R."/>
            <person name="Espay A.J."/>
            <person name="Male A."/>
            <person name="Molin A.M."/>
            <person name="Posmyk R."/>
            <person name="Battisti C."/>
            <person name="Casertano A."/>
            <person name="Melis D."/>
            <person name="van Kampen A."/>
            <person name="Baas F."/>
            <person name="Mannens M.M."/>
            <person name="Bocchinfuso G."/>
            <person name="Stella L."/>
            <person name="Tartaglia M."/>
            <person name="Hennekam R.C."/>
        </authorList>
    </citation>
    <scope>INVOLVEMENT IN PRIMS</scope>
    <scope>VARIANTS PRIMS GLN-590; ARG-596; ALA-602 AND PHE-621</scope>
    <scope>CHARACTERIZATION OF VARIANTS PRIMS GLN-590; ARG-596; ALA-602 AND PHE-621</scope>
</reference>
<reference key="10">
    <citation type="journal article" date="2014" name="Nat. Struct. Mol. Biol.">
        <title>Uncovering global SUMOylation signaling networks in a site-specific manner.</title>
        <authorList>
            <person name="Hendriks I.A."/>
            <person name="D'Souza R.C."/>
            <person name="Yang B."/>
            <person name="Verlaan-de Vries M."/>
            <person name="Mann M."/>
            <person name="Vertegaal A.C."/>
        </authorList>
    </citation>
    <scope>SUMOYLATION [LARGE SCALE ANALYSIS] AT LYS-330</scope>
    <scope>IDENTIFICATION BY MASS SPECTROMETRY [LARGE SCALE ANALYSIS]</scope>
</reference>
<reference key="11">
    <citation type="journal article" date="2014" name="Proc. Natl. Acad. Sci. U.S.A.">
        <title>Mapping of SUMO sites and analysis of SUMOylation changes induced by external stimuli.</title>
        <authorList>
            <person name="Impens F."/>
            <person name="Radoshevich L."/>
            <person name="Cossart P."/>
            <person name="Ribet D."/>
        </authorList>
    </citation>
    <scope>SUMOYLATION [LARGE SCALE ANALYSIS] AT LYS-330</scope>
    <scope>IDENTIFICATION BY MASS SPECTROMETRY [LARGE SCALE ANALYSIS]</scope>
</reference>
<reference key="12">
    <citation type="journal article" date="2015" name="Cell Rep.">
        <title>SUMO-2 orchestrates chromatin modifiers in response to DNA damage.</title>
        <authorList>
            <person name="Hendriks I.A."/>
            <person name="Treffers L.W."/>
            <person name="Verlaan-de Vries M."/>
            <person name="Olsen J.V."/>
            <person name="Vertegaal A.C."/>
        </authorList>
    </citation>
    <scope>SUMOYLATION [LARGE SCALE ANALYSIS] AT LYS-330</scope>
    <scope>IDENTIFICATION BY MASS SPECTROMETRY [LARGE SCALE ANALYSIS]</scope>
</reference>
<reference key="13">
    <citation type="journal article" date="2015" name="Mol. Cell. Proteomics">
        <title>System-wide analysis of SUMOylation dynamics in response to replication stress reveals novel small ubiquitin-like modified target proteins and acceptor lysines relevant for genome stability.</title>
        <authorList>
            <person name="Xiao Z."/>
            <person name="Chang J.G."/>
            <person name="Hendriks I.A."/>
            <person name="Sigurdsson J.O."/>
            <person name="Olsen J.V."/>
            <person name="Vertegaal A.C."/>
        </authorList>
    </citation>
    <scope>SUMOYLATION [LARGE SCALE ANALYSIS] AT LYS-330</scope>
    <scope>IDENTIFICATION BY MASS SPECTROMETRY [LARGE SCALE ANALYSIS]</scope>
</reference>
<reference key="14">
    <citation type="journal article" date="2017" name="Nat. Struct. Mol. Biol.">
        <title>Site-specific mapping of the human SUMO proteome reveals co-modification with phosphorylation.</title>
        <authorList>
            <person name="Hendriks I.A."/>
            <person name="Lyon D."/>
            <person name="Young C."/>
            <person name="Jensen L.J."/>
            <person name="Vertegaal A.C."/>
            <person name="Nielsen M.L."/>
        </authorList>
    </citation>
    <scope>SUMOYLATION [LARGE SCALE ANALYSIS] AT LYS-330; LYS-371 AND LYS-723</scope>
    <scope>IDENTIFICATION BY MASS SPECTROMETRY [LARGE SCALE ANALYSIS]</scope>
</reference>
<name>ZBT20_HUMAN</name>
<keyword id="KW-0025">Alternative splicing</keyword>
<keyword id="KW-0225">Disease variant</keyword>
<keyword id="KW-0238">DNA-binding</keyword>
<keyword id="KW-0991">Intellectual disability</keyword>
<keyword id="KW-1017">Isopeptide bond</keyword>
<keyword id="KW-0479">Metal-binding</keyword>
<keyword id="KW-0539">Nucleus</keyword>
<keyword id="KW-0597">Phosphoprotein</keyword>
<keyword id="KW-1267">Proteomics identification</keyword>
<keyword id="KW-1185">Reference proteome</keyword>
<keyword id="KW-0677">Repeat</keyword>
<keyword id="KW-0804">Transcription</keyword>
<keyword id="KW-0805">Transcription regulation</keyword>
<keyword id="KW-0832">Ubl conjugation</keyword>
<keyword id="KW-0862">Zinc</keyword>
<keyword id="KW-0863">Zinc-finger</keyword>
<accession>Q9HC78</accession>
<accession>Q63HP6</accession>
<accession>Q8N6R5</accession>
<accession>Q9Y410</accession>
<comment type="function">
    <text evidence="2 6">May be a transcription factor that may be involved in hematopoiesis, oncogenesis, and immune responses (PubMed:11352661). Plays a role in postnatal myogenesis, may be involved in the regulation of satellite cells self-renewal (By similarity).</text>
</comment>
<comment type="subunit">
    <text>Can homodimerize. Binds to DNA.</text>
</comment>
<comment type="subcellular location">
    <subcellularLocation>
        <location evidence="2">Nucleus</location>
    </subcellularLocation>
</comment>
<comment type="alternative products">
    <event type="alternative splicing"/>
    <isoform>
        <id>Q9HC78-1</id>
        <name>1</name>
        <sequence type="displayed"/>
    </isoform>
    <isoform>
        <id>Q9HC78-2</id>
        <name>2</name>
        <sequence type="described" ref="VSP_032503"/>
    </isoform>
</comment>
<comment type="tissue specificity">
    <text evidence="6">Expressed in spleen, lymph node, thymus, peripheral blood leukocytes, and fetal liver.</text>
</comment>
<comment type="PTM">
    <text evidence="1">Sumoylated with SUMO1.</text>
</comment>
<comment type="disease" evidence="7">
    <disease id="DI-04154">
        <name>Primrose syndrome</name>
        <acronym>PRIMS</acronym>
        <description>A disease characterized by macrocephaly, intellectual disability, disturbed behavior, dysmorphic facial features, ectopic calcifications, large calcified ear auricles, and progressive muscle wasting.</description>
        <dbReference type="MIM" id="259050"/>
    </disease>
    <text>The disease is caused by variants affecting the gene represented in this entry.</text>
</comment>
<dbReference type="EMBL" id="AF139460">
    <property type="protein sequence ID" value="AAG28340.2"/>
    <property type="molecule type" value="mRNA"/>
</dbReference>
<dbReference type="EMBL" id="AL050276">
    <property type="protein sequence ID" value="CAB43377.1"/>
    <property type="molecule type" value="mRNA"/>
</dbReference>
<dbReference type="EMBL" id="BX647778">
    <property type="protein sequence ID" value="CAH56190.1"/>
    <property type="molecule type" value="mRNA"/>
</dbReference>
<dbReference type="EMBL" id="CH471052">
    <property type="protein sequence ID" value="EAW79598.1"/>
    <property type="molecule type" value="Genomic_DNA"/>
</dbReference>
<dbReference type="EMBL" id="BC029041">
    <property type="protein sequence ID" value="AAH29041.1"/>
    <property type="molecule type" value="mRNA"/>
</dbReference>
<dbReference type="CCDS" id="CCDS2981.1">
    <molecule id="Q9HC78-2"/>
</dbReference>
<dbReference type="CCDS" id="CCDS54626.1">
    <molecule id="Q9HC78-1"/>
</dbReference>
<dbReference type="PIR" id="T08725">
    <property type="entry name" value="T08725"/>
</dbReference>
<dbReference type="RefSeq" id="NP_001157814.1">
    <molecule id="Q9HC78-1"/>
    <property type="nucleotide sequence ID" value="NM_001164342.2"/>
</dbReference>
<dbReference type="RefSeq" id="NP_001157815.1">
    <molecule id="Q9HC78-2"/>
    <property type="nucleotide sequence ID" value="NM_001164343.2"/>
</dbReference>
<dbReference type="RefSeq" id="NP_001157816.1">
    <molecule id="Q9HC78-2"/>
    <property type="nucleotide sequence ID" value="NM_001164344.4"/>
</dbReference>
<dbReference type="RefSeq" id="NP_001157817.1">
    <molecule id="Q9HC78-2"/>
    <property type="nucleotide sequence ID" value="NM_001164345.4"/>
</dbReference>
<dbReference type="RefSeq" id="NP_001157818.1">
    <molecule id="Q9HC78-2"/>
    <property type="nucleotide sequence ID" value="NM_001164346.2"/>
</dbReference>
<dbReference type="RefSeq" id="NP_001157819.1">
    <molecule id="Q9HC78-2"/>
    <property type="nucleotide sequence ID" value="NM_001164347.2"/>
</dbReference>
<dbReference type="RefSeq" id="NP_001335729.1">
    <molecule id="Q9HC78-1"/>
    <property type="nucleotide sequence ID" value="NM_001348800.3"/>
</dbReference>
<dbReference type="RefSeq" id="NP_001335730.1">
    <molecule id="Q9HC78-2"/>
    <property type="nucleotide sequence ID" value="NM_001348801.3"/>
</dbReference>
<dbReference type="RefSeq" id="NP_001335731.1">
    <molecule id="Q9HC78-2"/>
    <property type="nucleotide sequence ID" value="NM_001348802.3"/>
</dbReference>
<dbReference type="RefSeq" id="NP_001335732.1">
    <molecule id="Q9HC78-1"/>
    <property type="nucleotide sequence ID" value="NM_001348803.3"/>
</dbReference>
<dbReference type="RefSeq" id="NP_001335733.1">
    <molecule id="Q9HC78-2"/>
    <property type="nucleotide sequence ID" value="NM_001348804.3"/>
</dbReference>
<dbReference type="RefSeq" id="NP_001335734.1">
    <molecule id="Q9HC78-2"/>
    <property type="nucleotide sequence ID" value="NM_001348805.3"/>
</dbReference>
<dbReference type="RefSeq" id="NP_001380322.1">
    <molecule id="Q9HC78-1"/>
    <property type="nucleotide sequence ID" value="NM_001393393.1"/>
</dbReference>
<dbReference type="RefSeq" id="NP_001380323.1">
    <molecule id="Q9HC78-1"/>
    <property type="nucleotide sequence ID" value="NM_001393394.1"/>
</dbReference>
<dbReference type="RefSeq" id="NP_001380324.1">
    <molecule id="Q9HC78-2"/>
    <property type="nucleotide sequence ID" value="NM_001393395.1"/>
</dbReference>
<dbReference type="RefSeq" id="NP_001380325.1">
    <molecule id="Q9HC78-2"/>
    <property type="nucleotide sequence ID" value="NM_001393396.1"/>
</dbReference>
<dbReference type="RefSeq" id="NP_056457.3">
    <molecule id="Q9HC78-2"/>
    <property type="nucleotide sequence ID" value="NM_015642.5"/>
</dbReference>
<dbReference type="SMR" id="Q9HC78"/>
<dbReference type="BioGRID" id="117573">
    <property type="interactions" value="57"/>
</dbReference>
<dbReference type="FunCoup" id="Q9HC78">
    <property type="interactions" value="2418"/>
</dbReference>
<dbReference type="IntAct" id="Q9HC78">
    <property type="interactions" value="32"/>
</dbReference>
<dbReference type="STRING" id="9606.ENSP00000419153"/>
<dbReference type="GlyCosmos" id="Q9HC78">
    <property type="glycosylation" value="4 sites, 2 glycans"/>
</dbReference>
<dbReference type="GlyGen" id="Q9HC78">
    <property type="glycosylation" value="12 sites, 2 O-linked glycans (11 sites)"/>
</dbReference>
<dbReference type="iPTMnet" id="Q9HC78"/>
<dbReference type="PhosphoSitePlus" id="Q9HC78"/>
<dbReference type="BioMuta" id="ZBTB20"/>
<dbReference type="DMDM" id="172045933"/>
<dbReference type="jPOST" id="Q9HC78"/>
<dbReference type="MassIVE" id="Q9HC78"/>
<dbReference type="PaxDb" id="9606-ENSP00000419153"/>
<dbReference type="PeptideAtlas" id="Q9HC78"/>
<dbReference type="ProteomicsDB" id="81647">
    <molecule id="Q9HC78-1"/>
</dbReference>
<dbReference type="ProteomicsDB" id="81648">
    <molecule id="Q9HC78-2"/>
</dbReference>
<dbReference type="Antibodypedia" id="16495">
    <property type="antibodies" value="153 antibodies from 25 providers"/>
</dbReference>
<dbReference type="DNASU" id="26137"/>
<dbReference type="Ensembl" id="ENST00000357258.8">
    <molecule id="Q9HC78-2"/>
    <property type="protein sequence ID" value="ENSP00000349803.3"/>
    <property type="gene ID" value="ENSG00000181722.18"/>
</dbReference>
<dbReference type="Ensembl" id="ENST00000462705.5">
    <molecule id="Q9HC78-2"/>
    <property type="protein sequence ID" value="ENSP00000420324.1"/>
    <property type="gene ID" value="ENSG00000181722.18"/>
</dbReference>
<dbReference type="Ensembl" id="ENST00000464560.5">
    <molecule id="Q9HC78-2"/>
    <property type="protein sequence ID" value="ENSP00000417307.1"/>
    <property type="gene ID" value="ENSG00000181722.18"/>
</dbReference>
<dbReference type="Ensembl" id="ENST00000470311.6">
    <molecule id="Q9HC78-2"/>
    <property type="protein sequence ID" value="ENSP00000420684.2"/>
    <property type="gene ID" value="ENSG00000181722.18"/>
</dbReference>
<dbReference type="Ensembl" id="ENST00000471418.5">
    <molecule id="Q9HC78-2"/>
    <property type="protein sequence ID" value="ENSP00000419902.1"/>
    <property type="gene ID" value="ENSG00000181722.18"/>
</dbReference>
<dbReference type="Ensembl" id="ENST00000474710.6">
    <molecule id="Q9HC78-1"/>
    <property type="protein sequence ID" value="ENSP00000419153.1"/>
    <property type="gene ID" value="ENSG00000181722.18"/>
</dbReference>
<dbReference type="Ensembl" id="ENST00000481632.5">
    <molecule id="Q9HC78-2"/>
    <property type="protein sequence ID" value="ENSP00000418092.1"/>
    <property type="gene ID" value="ENSG00000181722.18"/>
</dbReference>
<dbReference type="Ensembl" id="ENST00000675478.1">
    <molecule id="Q9HC78-1"/>
    <property type="protein sequence ID" value="ENSP00000501561.1"/>
    <property type="gene ID" value="ENSG00000181722.18"/>
</dbReference>
<dbReference type="Ensembl" id="ENST00000676079.1">
    <molecule id="Q9HC78-1"/>
    <property type="protein sequence ID" value="ENSP00000502480.1"/>
    <property type="gene ID" value="ENSG00000181722.18"/>
</dbReference>
<dbReference type="Ensembl" id="ENST00000704358.1">
    <molecule id="Q9HC78-1"/>
    <property type="protein sequence ID" value="ENSP00000515869.1"/>
    <property type="gene ID" value="ENSG00000181722.18"/>
</dbReference>
<dbReference type="GeneID" id="26137"/>
<dbReference type="KEGG" id="hsa:26137"/>
<dbReference type="MANE-Select" id="ENST00000675478.1">
    <property type="protein sequence ID" value="ENSP00000501561.1"/>
    <property type="RefSeq nucleotide sequence ID" value="NM_001348800.3"/>
    <property type="RefSeq protein sequence ID" value="NP_001335729.1"/>
</dbReference>
<dbReference type="UCSC" id="uc003ebi.5">
    <molecule id="Q9HC78-1"/>
    <property type="organism name" value="human"/>
</dbReference>
<dbReference type="AGR" id="HGNC:13503"/>
<dbReference type="CTD" id="26137"/>
<dbReference type="DisGeNET" id="26137"/>
<dbReference type="GeneCards" id="ZBTB20"/>
<dbReference type="GeneReviews" id="ZBTB20"/>
<dbReference type="HGNC" id="HGNC:13503">
    <property type="gene designation" value="ZBTB20"/>
</dbReference>
<dbReference type="HPA" id="ENSG00000181722">
    <property type="expression patterns" value="Low tissue specificity"/>
</dbReference>
<dbReference type="MalaCards" id="ZBTB20"/>
<dbReference type="MIM" id="259050">
    <property type="type" value="phenotype"/>
</dbReference>
<dbReference type="MIM" id="606025">
    <property type="type" value="gene"/>
</dbReference>
<dbReference type="neXtProt" id="NX_Q9HC78"/>
<dbReference type="OpenTargets" id="ENSG00000181722"/>
<dbReference type="Orphanet" id="3042">
    <property type="disease" value="Intellectual disability-cataracts-calcified pinnae-myopathy syndrome"/>
</dbReference>
<dbReference type="PharmGKB" id="PA37789"/>
<dbReference type="VEuPathDB" id="HostDB:ENSG00000181722"/>
<dbReference type="eggNOG" id="KOG1721">
    <property type="taxonomic scope" value="Eukaryota"/>
</dbReference>
<dbReference type="GeneTree" id="ENSGT00940000158617"/>
<dbReference type="HOGENOM" id="CLU_019055_0_0_1"/>
<dbReference type="InParanoid" id="Q9HC78"/>
<dbReference type="OMA" id="DEFSCYD"/>
<dbReference type="OrthoDB" id="6077919at2759"/>
<dbReference type="PAN-GO" id="Q9HC78">
    <property type="GO annotations" value="4 GO annotations based on evolutionary models"/>
</dbReference>
<dbReference type="PhylomeDB" id="Q9HC78"/>
<dbReference type="TreeFam" id="TF335684"/>
<dbReference type="PathwayCommons" id="Q9HC78"/>
<dbReference type="SignaLink" id="Q9HC78"/>
<dbReference type="SIGNOR" id="Q9HC78"/>
<dbReference type="BioGRID-ORCS" id="26137">
    <property type="hits" value="17 hits in 1212 CRISPR screens"/>
</dbReference>
<dbReference type="ChiTaRS" id="ZBTB20">
    <property type="organism name" value="human"/>
</dbReference>
<dbReference type="GeneWiki" id="ZBTB20"/>
<dbReference type="GenomeRNAi" id="26137"/>
<dbReference type="Pharos" id="Q9HC78">
    <property type="development level" value="Tbio"/>
</dbReference>
<dbReference type="PRO" id="PR:Q9HC78"/>
<dbReference type="Proteomes" id="UP000005640">
    <property type="component" value="Chromosome 3"/>
</dbReference>
<dbReference type="RNAct" id="Q9HC78">
    <property type="molecule type" value="protein"/>
</dbReference>
<dbReference type="Bgee" id="ENSG00000181722">
    <property type="expression patterns" value="Expressed in corpus epididymis and 208 other cell types or tissues"/>
</dbReference>
<dbReference type="ExpressionAtlas" id="Q9HC78">
    <property type="expression patterns" value="baseline and differential"/>
</dbReference>
<dbReference type="GO" id="GO:0005737">
    <property type="term" value="C:cytoplasm"/>
    <property type="evidence" value="ECO:0000250"/>
    <property type="project" value="UniProtKB"/>
</dbReference>
<dbReference type="GO" id="GO:0016604">
    <property type="term" value="C:nuclear body"/>
    <property type="evidence" value="ECO:0000314"/>
    <property type="project" value="HPA"/>
</dbReference>
<dbReference type="GO" id="GO:0005654">
    <property type="term" value="C:nucleoplasm"/>
    <property type="evidence" value="ECO:0000314"/>
    <property type="project" value="HPA"/>
</dbReference>
<dbReference type="GO" id="GO:0005634">
    <property type="term" value="C:nucleus"/>
    <property type="evidence" value="ECO:0000250"/>
    <property type="project" value="UniProtKB"/>
</dbReference>
<dbReference type="GO" id="GO:0001227">
    <property type="term" value="F:DNA-binding transcription repressor activity, RNA polymerase II-specific"/>
    <property type="evidence" value="ECO:0000318"/>
    <property type="project" value="GO_Central"/>
</dbReference>
<dbReference type="GO" id="GO:0000978">
    <property type="term" value="F:RNA polymerase II cis-regulatory region sequence-specific DNA binding"/>
    <property type="evidence" value="ECO:0000318"/>
    <property type="project" value="GO_Central"/>
</dbReference>
<dbReference type="GO" id="GO:1990837">
    <property type="term" value="F:sequence-specific double-stranded DNA binding"/>
    <property type="evidence" value="ECO:0000314"/>
    <property type="project" value="ARUK-UCL"/>
</dbReference>
<dbReference type="GO" id="GO:0000976">
    <property type="term" value="F:transcription cis-regulatory region binding"/>
    <property type="evidence" value="ECO:0000250"/>
    <property type="project" value="UniProtKB"/>
</dbReference>
<dbReference type="GO" id="GO:0008270">
    <property type="term" value="F:zinc ion binding"/>
    <property type="evidence" value="ECO:0007669"/>
    <property type="project" value="UniProtKB-KW"/>
</dbReference>
<dbReference type="GO" id="GO:0071333">
    <property type="term" value="P:cellular response to glucose stimulus"/>
    <property type="evidence" value="ECO:0000250"/>
    <property type="project" value="UniProtKB"/>
</dbReference>
<dbReference type="GO" id="GO:0055088">
    <property type="term" value="P:lipid homeostasis"/>
    <property type="evidence" value="ECO:0000250"/>
    <property type="project" value="UniProtKB"/>
</dbReference>
<dbReference type="GO" id="GO:0010629">
    <property type="term" value="P:negative regulation of gene expression"/>
    <property type="evidence" value="ECO:0007669"/>
    <property type="project" value="Ensembl"/>
</dbReference>
<dbReference type="GO" id="GO:0000122">
    <property type="term" value="P:negative regulation of transcription by RNA polymerase II"/>
    <property type="evidence" value="ECO:0000318"/>
    <property type="project" value="GO_Central"/>
</dbReference>
<dbReference type="GO" id="GO:0045821">
    <property type="term" value="P:positive regulation of glycolytic process"/>
    <property type="evidence" value="ECO:0000250"/>
    <property type="project" value="UniProtKB"/>
</dbReference>
<dbReference type="GO" id="GO:0032728">
    <property type="term" value="P:positive regulation of interferon-beta production"/>
    <property type="evidence" value="ECO:0007669"/>
    <property type="project" value="Ensembl"/>
</dbReference>
<dbReference type="GO" id="GO:0032755">
    <property type="term" value="P:positive regulation of interleukin-6 production"/>
    <property type="evidence" value="ECO:0007669"/>
    <property type="project" value="Ensembl"/>
</dbReference>
<dbReference type="GO" id="GO:0046889">
    <property type="term" value="P:positive regulation of lipid biosynthetic process"/>
    <property type="evidence" value="ECO:0000250"/>
    <property type="project" value="UniProtKB"/>
</dbReference>
<dbReference type="GO" id="GO:0032760">
    <property type="term" value="P:positive regulation of tumor necrosis factor production"/>
    <property type="evidence" value="ECO:0007669"/>
    <property type="project" value="Ensembl"/>
</dbReference>
<dbReference type="GO" id="GO:0001817">
    <property type="term" value="P:regulation of cytokine production"/>
    <property type="evidence" value="ECO:0000318"/>
    <property type="project" value="GO_Central"/>
</dbReference>
<dbReference type="GO" id="GO:0002682">
    <property type="term" value="P:regulation of immune system process"/>
    <property type="evidence" value="ECO:0000318"/>
    <property type="project" value="GO_Central"/>
</dbReference>
<dbReference type="CDD" id="cd18208">
    <property type="entry name" value="BTB_POZ_ZBTB20_DPZF"/>
    <property type="match status" value="1"/>
</dbReference>
<dbReference type="FunFam" id="3.30.710.10:FF:000039">
    <property type="entry name" value="Zinc finger and BTB domain containing 20"/>
    <property type="match status" value="1"/>
</dbReference>
<dbReference type="FunFam" id="3.30.160.60:FF:000304">
    <property type="entry name" value="Zinc finger and BTB domain-containing protein 20"/>
    <property type="match status" value="1"/>
</dbReference>
<dbReference type="FunFam" id="3.30.160.60:FF:000315">
    <property type="entry name" value="Zinc finger and BTB domain-containing protein 20"/>
    <property type="match status" value="1"/>
</dbReference>
<dbReference type="FunFam" id="3.30.160.60:FF:000426">
    <property type="entry name" value="Zinc finger and BTB domain-containing protein 20"/>
    <property type="match status" value="1"/>
</dbReference>
<dbReference type="FunFam" id="3.30.160.60:FF:000854">
    <property type="entry name" value="zinc finger and BTB domain-containing protein 20 isoform X1"/>
    <property type="match status" value="1"/>
</dbReference>
<dbReference type="Gene3D" id="3.30.160.60">
    <property type="entry name" value="Classic Zinc Finger"/>
    <property type="match status" value="4"/>
</dbReference>
<dbReference type="Gene3D" id="3.30.710.10">
    <property type="entry name" value="Potassium Channel Kv1.1, Chain A"/>
    <property type="match status" value="1"/>
</dbReference>
<dbReference type="InterPro" id="IPR000210">
    <property type="entry name" value="BTB/POZ_dom"/>
</dbReference>
<dbReference type="InterPro" id="IPR011333">
    <property type="entry name" value="SKP1/BTB/POZ_sf"/>
</dbReference>
<dbReference type="InterPro" id="IPR036236">
    <property type="entry name" value="Znf_C2H2_sf"/>
</dbReference>
<dbReference type="InterPro" id="IPR013087">
    <property type="entry name" value="Znf_C2H2_type"/>
</dbReference>
<dbReference type="InterPro" id="IPR050457">
    <property type="entry name" value="ZnFinger_BTB_dom_contain"/>
</dbReference>
<dbReference type="PANTHER" id="PTHR46105">
    <property type="entry name" value="AGAP004733-PA"/>
    <property type="match status" value="1"/>
</dbReference>
<dbReference type="PANTHER" id="PTHR46105:SF22">
    <property type="entry name" value="ZINC FINGER AND BTB DOMAIN CONTAINING 45"/>
    <property type="match status" value="1"/>
</dbReference>
<dbReference type="Pfam" id="PF00651">
    <property type="entry name" value="BTB"/>
    <property type="match status" value="1"/>
</dbReference>
<dbReference type="Pfam" id="PF00096">
    <property type="entry name" value="zf-C2H2"/>
    <property type="match status" value="5"/>
</dbReference>
<dbReference type="SMART" id="SM00225">
    <property type="entry name" value="BTB"/>
    <property type="match status" value="1"/>
</dbReference>
<dbReference type="SMART" id="SM00355">
    <property type="entry name" value="ZnF_C2H2"/>
    <property type="match status" value="5"/>
</dbReference>
<dbReference type="SUPFAM" id="SSF57667">
    <property type="entry name" value="beta-beta-alpha zinc fingers"/>
    <property type="match status" value="2"/>
</dbReference>
<dbReference type="SUPFAM" id="SSF54695">
    <property type="entry name" value="POZ domain"/>
    <property type="match status" value="1"/>
</dbReference>
<dbReference type="PROSITE" id="PS50097">
    <property type="entry name" value="BTB"/>
    <property type="match status" value="1"/>
</dbReference>
<dbReference type="PROSITE" id="PS00028">
    <property type="entry name" value="ZINC_FINGER_C2H2_1"/>
    <property type="match status" value="5"/>
</dbReference>
<dbReference type="PROSITE" id="PS50157">
    <property type="entry name" value="ZINC_FINGER_C2H2_2"/>
    <property type="match status" value="5"/>
</dbReference>